<proteinExistence type="inferred from homology"/>
<sequence length="347" mass="38422">MNKKSLNIVVMFGILMILAFSGCVDQNASESTSEDTTPKILKIFHAGSLAVPFGEYESLYEAEYPNVDVQREAAGSVACVRKITELNKTAEILASADYTLIPDMMMPDYADWYVMVAKNEIVIAYTENSQYYDEITTENWYEIFQRGGVKYGFSSPNDDPCGYRTQMVVQLAETAYGDSTIYDDLMLENSNFEVDENADGTYLVRSPASIEVNEEKVFMRSKEVDLLGPLETGAFDYLFIYKSVANQHNLSYIELPAEINLGSYANADDYAKASIILEGQNSTILAKPIVYGMTVPSNAEDYEEGVNFVKTVLENPDVFENAGQPVISPAIAVGNVPDELSDLVTMG</sequence>
<comment type="similarity">
    <text evidence="2">Belongs to the bacterial solute-binding protein 1 family. WtpA subfamily.</text>
</comment>
<accession>A4G0R9</accession>
<protein>
    <recommendedName>
        <fullName>Uncharacterized solute-binding protein MmarC5_1756</fullName>
    </recommendedName>
</protein>
<evidence type="ECO:0000255" key="1">
    <source>
        <dbReference type="PROSITE-ProRule" id="PRU00303"/>
    </source>
</evidence>
<evidence type="ECO:0000305" key="2"/>
<dbReference type="EMBL" id="CP000609">
    <property type="protein sequence ID" value="ABO36053.1"/>
    <property type="molecule type" value="Genomic_DNA"/>
</dbReference>
<dbReference type="RefSeq" id="WP_011869499.1">
    <property type="nucleotide sequence ID" value="NC_009135.1"/>
</dbReference>
<dbReference type="SMR" id="A4G0R9"/>
<dbReference type="STRING" id="402880.MmarC5_1756"/>
<dbReference type="GeneID" id="4927962"/>
<dbReference type="KEGG" id="mmq:MmarC5_1756"/>
<dbReference type="eggNOG" id="arCOG00219">
    <property type="taxonomic scope" value="Archaea"/>
</dbReference>
<dbReference type="HOGENOM" id="CLU_055936_0_0_2"/>
<dbReference type="OrthoDB" id="7820at2157"/>
<dbReference type="Proteomes" id="UP000000253">
    <property type="component" value="Chromosome"/>
</dbReference>
<dbReference type="GO" id="GO:0030973">
    <property type="term" value="F:molybdate ion binding"/>
    <property type="evidence" value="ECO:0007669"/>
    <property type="project" value="TreeGrafter"/>
</dbReference>
<dbReference type="GO" id="GO:1901359">
    <property type="term" value="F:tungstate binding"/>
    <property type="evidence" value="ECO:0007669"/>
    <property type="project" value="InterPro"/>
</dbReference>
<dbReference type="GO" id="GO:0015689">
    <property type="term" value="P:molybdate ion transport"/>
    <property type="evidence" value="ECO:0007669"/>
    <property type="project" value="TreeGrafter"/>
</dbReference>
<dbReference type="CDD" id="cd13540">
    <property type="entry name" value="PBP2_ModA_WtpA"/>
    <property type="match status" value="1"/>
</dbReference>
<dbReference type="Gene3D" id="3.40.190.10">
    <property type="entry name" value="Periplasmic binding protein-like II"/>
    <property type="match status" value="2"/>
</dbReference>
<dbReference type="InterPro" id="IPR022498">
    <property type="entry name" value="ABC_trnspt_W-bd_WtpA"/>
</dbReference>
<dbReference type="InterPro" id="IPR050682">
    <property type="entry name" value="ModA/WtpA"/>
</dbReference>
<dbReference type="NCBIfam" id="NF003196">
    <property type="entry name" value="PRK04168.1"/>
    <property type="match status" value="1"/>
</dbReference>
<dbReference type="NCBIfam" id="TIGR03730">
    <property type="entry name" value="tungstate_WtpA"/>
    <property type="match status" value="1"/>
</dbReference>
<dbReference type="PANTHER" id="PTHR30632">
    <property type="entry name" value="MOLYBDATE-BINDING PERIPLASMIC PROTEIN"/>
    <property type="match status" value="1"/>
</dbReference>
<dbReference type="PANTHER" id="PTHR30632:SF16">
    <property type="entry name" value="MOLYBDATE_TUNGSTATE-BINDING PROTEIN WTPA"/>
    <property type="match status" value="1"/>
</dbReference>
<dbReference type="Pfam" id="PF13531">
    <property type="entry name" value="SBP_bac_11"/>
    <property type="match status" value="1"/>
</dbReference>
<dbReference type="SUPFAM" id="SSF53850">
    <property type="entry name" value="Periplasmic binding protein-like II"/>
    <property type="match status" value="1"/>
</dbReference>
<dbReference type="PROSITE" id="PS51257">
    <property type="entry name" value="PROKAR_LIPOPROTEIN"/>
    <property type="match status" value="1"/>
</dbReference>
<name>Y1756_METM5</name>
<reference key="1">
    <citation type="submission" date="2007-03" db="EMBL/GenBank/DDBJ databases">
        <title>Complete sequence of chromosome of Methanococcus maripaludis C5.</title>
        <authorList>
            <consortium name="US DOE Joint Genome Institute"/>
            <person name="Copeland A."/>
            <person name="Lucas S."/>
            <person name="Lapidus A."/>
            <person name="Barry K."/>
            <person name="Glavina del Rio T."/>
            <person name="Dalin E."/>
            <person name="Tice H."/>
            <person name="Pitluck S."/>
            <person name="Chertkov O."/>
            <person name="Brettin T."/>
            <person name="Bruce D."/>
            <person name="Han C."/>
            <person name="Detter J.C."/>
            <person name="Schmutz J."/>
            <person name="Larimer F."/>
            <person name="Land M."/>
            <person name="Hauser L."/>
            <person name="Kyrpides N."/>
            <person name="Mikhailova N."/>
            <person name="Sieprawska-Lupa M."/>
            <person name="Whitman W.B."/>
            <person name="Richardson P."/>
        </authorList>
    </citation>
    <scope>NUCLEOTIDE SEQUENCE [LARGE SCALE GENOMIC DNA]</scope>
    <source>
        <strain>C5 / ATCC BAA-1333</strain>
    </source>
</reference>
<keyword id="KW-0732">Signal</keyword>
<feature type="signal peptide" evidence="1">
    <location>
        <begin position="1"/>
        <end position="21"/>
    </location>
</feature>
<feature type="chain" id="PRO_0000334993" description="Uncharacterized solute-binding protein MmarC5_1756">
    <location>
        <begin position="22"/>
        <end position="347"/>
    </location>
</feature>
<organism>
    <name type="scientific">Methanococcus maripaludis (strain C5 / ATCC BAA-1333)</name>
    <dbReference type="NCBI Taxonomy" id="402880"/>
    <lineage>
        <taxon>Archaea</taxon>
        <taxon>Methanobacteriati</taxon>
        <taxon>Methanobacteriota</taxon>
        <taxon>Methanomada group</taxon>
        <taxon>Methanococci</taxon>
        <taxon>Methanococcales</taxon>
        <taxon>Methanococcaceae</taxon>
        <taxon>Methanococcus</taxon>
    </lineage>
</organism>
<gene>
    <name type="ordered locus">MmarC5_1756</name>
</gene>